<name>NEP_I72A5</name>
<gene>
    <name evidence="1" type="primary">NS</name>
</gene>
<organism>
    <name type="scientific">Influenza A virus (strain A/Shearwater/Australia/1972 H6N5)</name>
    <dbReference type="NCBI Taxonomy" id="383604"/>
    <lineage>
        <taxon>Viruses</taxon>
        <taxon>Riboviria</taxon>
        <taxon>Orthornavirae</taxon>
        <taxon>Negarnaviricota</taxon>
        <taxon>Polyploviricotina</taxon>
        <taxon>Insthoviricetes</taxon>
        <taxon>Articulavirales</taxon>
        <taxon>Orthomyxoviridae</taxon>
        <taxon>Alphainfluenzavirus</taxon>
        <taxon>Alphainfluenzavirus influenzae</taxon>
        <taxon>Influenza A virus</taxon>
    </lineage>
</organism>
<reference key="1">
    <citation type="submission" date="1993-11" db="EMBL/GenBank/DDBJ databases">
        <title>Influenza NS1 protein.</title>
        <authorList>
            <person name="Ward A.C."/>
        </authorList>
    </citation>
    <scope>NUCLEOTIDE SEQUENCE [GENOMIC RNA]</scope>
</reference>
<evidence type="ECO:0000255" key="1">
    <source>
        <dbReference type="HAMAP-Rule" id="MF_04067"/>
    </source>
</evidence>
<sequence>MDSNTVSSFQDILMRMSKMQLGSSSEDLNGMITQFESLKLYRDSLGEAVMRMGDLHSLQNRNGKWREQLSQKFEEIRWLIEEVRHRLKITENSFEQITFMQALQLLLEVEQEIRTFSFQLI</sequence>
<feature type="chain" id="PRO_0000324209" description="Nuclear export protein">
    <location>
        <begin position="1"/>
        <end position="121"/>
    </location>
</feature>
<feature type="short sequence motif" description="Nuclear export signal" evidence="1">
    <location>
        <begin position="12"/>
        <end position="21"/>
    </location>
</feature>
<feature type="short sequence motif" description="Nuclear export signal" evidence="1">
    <location>
        <begin position="85"/>
        <end position="94"/>
    </location>
</feature>
<proteinExistence type="inferred from homology"/>
<keyword id="KW-0025">Alternative splicing</keyword>
<keyword id="KW-1048">Host nucleus</keyword>
<keyword id="KW-0945">Host-virus interaction</keyword>
<keyword id="KW-0813">Transport</keyword>
<keyword id="KW-0946">Virion</keyword>
<organismHost>
    <name type="scientific">Aves</name>
    <dbReference type="NCBI Taxonomy" id="8782"/>
</organismHost>
<accession>Q67255</accession>
<accession>O12542</accession>
<accession>O12831</accession>
<comment type="function">
    <text evidence="1">Mediates the nuclear export of encapsidated genomic RNAs (ribonucleoproteins, RNPs). Acts as an adapter between viral RNPs complexes and the nuclear export machinery of the cell. Possesses no intrinsic RNA-binding activity, but includes a C-terminal M1-binding domain. This domain is believed to allow recognition of RNPs bound to the protein M1. Since protein M1 is not available in large quantities before late stages of infection, such an indirect recognition mechanism probably ensures that genomic RNPs are not exported from the host nucleus until sufficient quantities of viral mRNA and progeny genomic RNA have been synthesized. Furthermore, the RNPs enter the host cytoplasm only when associated with the M1 protein that is necessary to guide them to the plasma membrane. May down-regulate viral RNA synthesis when overproduced.</text>
</comment>
<comment type="subunit">
    <text evidence="1">Interacts with protein M1. May interact with host nucleoporin RAB/HRB and exportin XPO1/CRM1.</text>
</comment>
<comment type="subcellular location">
    <subcellularLocation>
        <location evidence="1">Virion</location>
    </subcellularLocation>
    <subcellularLocation>
        <location evidence="1">Host nucleus</location>
    </subcellularLocation>
</comment>
<comment type="alternative products">
    <event type="alternative splicing"/>
    <isoform>
        <id>Q67255-1</id>
        <name>NEP</name>
        <name>NS2</name>
        <sequence type="displayed"/>
    </isoform>
    <isoform>
        <id>Q67256-1</id>
        <name>NS1</name>
        <sequence type="external"/>
    </isoform>
</comment>
<comment type="similarity">
    <text evidence="1">Belongs to the influenza viruses NEP family.</text>
</comment>
<dbReference type="EMBL" id="L25830">
    <property type="protein sequence ID" value="AAA43490.1"/>
    <property type="molecule type" value="Genomic_RNA"/>
</dbReference>
<dbReference type="SMR" id="Q67255"/>
<dbReference type="Proteomes" id="UP000157292">
    <property type="component" value="Genome"/>
</dbReference>
<dbReference type="GO" id="GO:0042025">
    <property type="term" value="C:host cell nucleus"/>
    <property type="evidence" value="ECO:0007669"/>
    <property type="project" value="UniProtKB-SubCell"/>
</dbReference>
<dbReference type="GO" id="GO:0044423">
    <property type="term" value="C:virion component"/>
    <property type="evidence" value="ECO:0007669"/>
    <property type="project" value="UniProtKB-UniRule"/>
</dbReference>
<dbReference type="GO" id="GO:0039675">
    <property type="term" value="P:exit of virus from host cell nucleus through nuclear pore"/>
    <property type="evidence" value="ECO:0007669"/>
    <property type="project" value="UniProtKB-UniRule"/>
</dbReference>
<dbReference type="Gene3D" id="1.10.287.230">
    <property type="match status" value="1"/>
</dbReference>
<dbReference type="Gene3D" id="1.10.287.10">
    <property type="entry name" value="S15/NS1, RNA-binding"/>
    <property type="match status" value="1"/>
</dbReference>
<dbReference type="HAMAP" id="MF_04067">
    <property type="entry name" value="INFV_NEP"/>
    <property type="match status" value="1"/>
</dbReference>
<dbReference type="InterPro" id="IPR000968">
    <property type="entry name" value="Flu_NS2"/>
</dbReference>
<dbReference type="Pfam" id="PF00601">
    <property type="entry name" value="Flu_NS2"/>
    <property type="match status" value="1"/>
</dbReference>
<dbReference type="SUPFAM" id="SSF101156">
    <property type="entry name" value="Nonstructural protein ns2, Nep, M1-binding domain"/>
    <property type="match status" value="1"/>
</dbReference>
<protein>
    <recommendedName>
        <fullName evidence="1">Nuclear export protein</fullName>
        <shortName evidence="1">NEP</shortName>
    </recommendedName>
    <alternativeName>
        <fullName evidence="1">Non-structural protein 2</fullName>
        <shortName evidence="1">NS2</shortName>
    </alternativeName>
</protein>